<gene>
    <name evidence="1" type="primary">fabZ</name>
    <name type="ordered locus">RHE_CH01922</name>
</gene>
<dbReference type="EC" id="4.2.1.59" evidence="1"/>
<dbReference type="EMBL" id="CP000133">
    <property type="protein sequence ID" value="ABC90708.1"/>
    <property type="molecule type" value="Genomic_DNA"/>
</dbReference>
<dbReference type="RefSeq" id="WP_011425200.1">
    <property type="nucleotide sequence ID" value="NC_007761.1"/>
</dbReference>
<dbReference type="SMR" id="Q2K8X8"/>
<dbReference type="KEGG" id="ret:RHE_CH01922"/>
<dbReference type="eggNOG" id="COG0764">
    <property type="taxonomic scope" value="Bacteria"/>
</dbReference>
<dbReference type="HOGENOM" id="CLU_078912_1_2_5"/>
<dbReference type="OrthoDB" id="9772788at2"/>
<dbReference type="Proteomes" id="UP000001936">
    <property type="component" value="Chromosome"/>
</dbReference>
<dbReference type="GO" id="GO:0005737">
    <property type="term" value="C:cytoplasm"/>
    <property type="evidence" value="ECO:0007669"/>
    <property type="project" value="UniProtKB-SubCell"/>
</dbReference>
<dbReference type="GO" id="GO:0016020">
    <property type="term" value="C:membrane"/>
    <property type="evidence" value="ECO:0007669"/>
    <property type="project" value="GOC"/>
</dbReference>
<dbReference type="GO" id="GO:0019171">
    <property type="term" value="F:(3R)-hydroxyacyl-[acyl-carrier-protein] dehydratase activity"/>
    <property type="evidence" value="ECO:0007669"/>
    <property type="project" value="UniProtKB-EC"/>
</dbReference>
<dbReference type="GO" id="GO:0006633">
    <property type="term" value="P:fatty acid biosynthetic process"/>
    <property type="evidence" value="ECO:0007669"/>
    <property type="project" value="UniProtKB-UniRule"/>
</dbReference>
<dbReference type="GO" id="GO:0009245">
    <property type="term" value="P:lipid A biosynthetic process"/>
    <property type="evidence" value="ECO:0007669"/>
    <property type="project" value="UniProtKB-UniRule"/>
</dbReference>
<dbReference type="CDD" id="cd01288">
    <property type="entry name" value="FabZ"/>
    <property type="match status" value="1"/>
</dbReference>
<dbReference type="FunFam" id="3.10.129.10:FF:000001">
    <property type="entry name" value="3-hydroxyacyl-[acyl-carrier-protein] dehydratase FabZ"/>
    <property type="match status" value="1"/>
</dbReference>
<dbReference type="Gene3D" id="3.10.129.10">
    <property type="entry name" value="Hotdog Thioesterase"/>
    <property type="match status" value="1"/>
</dbReference>
<dbReference type="HAMAP" id="MF_00406">
    <property type="entry name" value="FabZ"/>
    <property type="match status" value="1"/>
</dbReference>
<dbReference type="InterPro" id="IPR013114">
    <property type="entry name" value="FabA_FabZ"/>
</dbReference>
<dbReference type="InterPro" id="IPR010084">
    <property type="entry name" value="FabZ"/>
</dbReference>
<dbReference type="InterPro" id="IPR029069">
    <property type="entry name" value="HotDog_dom_sf"/>
</dbReference>
<dbReference type="NCBIfam" id="TIGR01750">
    <property type="entry name" value="fabZ"/>
    <property type="match status" value="1"/>
</dbReference>
<dbReference type="NCBIfam" id="NF000582">
    <property type="entry name" value="PRK00006.1"/>
    <property type="match status" value="1"/>
</dbReference>
<dbReference type="PANTHER" id="PTHR30272">
    <property type="entry name" value="3-HYDROXYACYL-[ACYL-CARRIER-PROTEIN] DEHYDRATASE"/>
    <property type="match status" value="1"/>
</dbReference>
<dbReference type="PANTHER" id="PTHR30272:SF1">
    <property type="entry name" value="3-HYDROXYACYL-[ACYL-CARRIER-PROTEIN] DEHYDRATASE"/>
    <property type="match status" value="1"/>
</dbReference>
<dbReference type="Pfam" id="PF07977">
    <property type="entry name" value="FabA"/>
    <property type="match status" value="1"/>
</dbReference>
<dbReference type="SUPFAM" id="SSF54637">
    <property type="entry name" value="Thioesterase/thiol ester dehydrase-isomerase"/>
    <property type="match status" value="1"/>
</dbReference>
<comment type="function">
    <text evidence="1">Involved in unsaturated fatty acids biosynthesis. Catalyzes the dehydration of short chain beta-hydroxyacyl-ACPs and long chain saturated and unsaturated beta-hydroxyacyl-ACPs.</text>
</comment>
<comment type="catalytic activity">
    <reaction evidence="1">
        <text>a (3R)-hydroxyacyl-[ACP] = a (2E)-enoyl-[ACP] + H2O</text>
        <dbReference type="Rhea" id="RHEA:13097"/>
        <dbReference type="Rhea" id="RHEA-COMP:9925"/>
        <dbReference type="Rhea" id="RHEA-COMP:9945"/>
        <dbReference type="ChEBI" id="CHEBI:15377"/>
        <dbReference type="ChEBI" id="CHEBI:78784"/>
        <dbReference type="ChEBI" id="CHEBI:78827"/>
        <dbReference type="EC" id="4.2.1.59"/>
    </reaction>
</comment>
<comment type="subcellular location">
    <subcellularLocation>
        <location evidence="1">Cytoplasm</location>
    </subcellularLocation>
</comment>
<comment type="similarity">
    <text evidence="1">Belongs to the thioester dehydratase family. FabZ subfamily.</text>
</comment>
<protein>
    <recommendedName>
        <fullName evidence="1">3-hydroxyacyl-[acyl-carrier-protein] dehydratase FabZ</fullName>
        <ecNumber evidence="1">4.2.1.59</ecNumber>
    </recommendedName>
    <alternativeName>
        <fullName evidence="1">(3R)-hydroxymyristoyl-[acyl-carrier-protein] dehydratase</fullName>
        <shortName evidence="1">(3R)-hydroxymyristoyl-ACP dehydrase</shortName>
    </alternativeName>
    <alternativeName>
        <fullName evidence="1">Beta-hydroxyacyl-ACP dehydratase</fullName>
    </alternativeName>
</protein>
<organism>
    <name type="scientific">Rhizobium etli (strain ATCC 51251 / DSM 11541 / JCM 21823 / NBRC 15573 / CFN 42)</name>
    <dbReference type="NCBI Taxonomy" id="347834"/>
    <lineage>
        <taxon>Bacteria</taxon>
        <taxon>Pseudomonadati</taxon>
        <taxon>Pseudomonadota</taxon>
        <taxon>Alphaproteobacteria</taxon>
        <taxon>Hyphomicrobiales</taxon>
        <taxon>Rhizobiaceae</taxon>
        <taxon>Rhizobium/Agrobacterium group</taxon>
        <taxon>Rhizobium</taxon>
    </lineage>
</organism>
<proteinExistence type="inferred from homology"/>
<evidence type="ECO:0000255" key="1">
    <source>
        <dbReference type="HAMAP-Rule" id="MF_00406"/>
    </source>
</evidence>
<reference key="1">
    <citation type="journal article" date="2006" name="Proc. Natl. Acad. Sci. U.S.A.">
        <title>The partitioned Rhizobium etli genome: genetic and metabolic redundancy in seven interacting replicons.</title>
        <authorList>
            <person name="Gonzalez V."/>
            <person name="Santamaria R.I."/>
            <person name="Bustos P."/>
            <person name="Hernandez-Gonzalez I."/>
            <person name="Medrano-Soto A."/>
            <person name="Moreno-Hagelsieb G."/>
            <person name="Janga S.C."/>
            <person name="Ramirez M.A."/>
            <person name="Jimenez-Jacinto V."/>
            <person name="Collado-Vides J."/>
            <person name="Davila G."/>
        </authorList>
    </citation>
    <scope>NUCLEOTIDE SEQUENCE [LARGE SCALE GENOMIC DNA]</scope>
    <source>
        <strain>ATCC 51251 / DSM 11541 / JCM 21823 / NBRC 15573 / CFN 42</strain>
    </source>
</reference>
<feature type="chain" id="PRO_0000242895" description="3-hydroxyacyl-[acyl-carrier-protein] dehydratase FabZ">
    <location>
        <begin position="1"/>
        <end position="155"/>
    </location>
</feature>
<feature type="active site" evidence="1">
    <location>
        <position position="58"/>
    </location>
</feature>
<accession>Q2K8X8</accession>
<sequence>MTEEATTTLSSADITEIMKLLPHRYPFLMVDKIIEIDGDNTAIGIKNVTVNEPHFTGHFPEAPIMPGVLLIEGMAQTAGAICAKKEGQTGNLVYFMTIENARFRKPVVPGDRVEFHVKKNKQRGNIWKFHCDAKVDGALVAEADIGAMIVRKDQA</sequence>
<name>FABZ_RHIEC</name>
<keyword id="KW-0963">Cytoplasm</keyword>
<keyword id="KW-0441">Lipid A biosynthesis</keyword>
<keyword id="KW-0444">Lipid biosynthesis</keyword>
<keyword id="KW-0443">Lipid metabolism</keyword>
<keyword id="KW-0456">Lyase</keyword>
<keyword id="KW-1185">Reference proteome</keyword>